<accession>A7MMV9</accession>
<keyword id="KW-0066">ATP synthesis</keyword>
<keyword id="KW-0997">Cell inner membrane</keyword>
<keyword id="KW-1003">Cell membrane</keyword>
<keyword id="KW-0138">CF(0)</keyword>
<keyword id="KW-0375">Hydrogen ion transport</keyword>
<keyword id="KW-0406">Ion transport</keyword>
<keyword id="KW-0446">Lipid-binding</keyword>
<keyword id="KW-0472">Membrane</keyword>
<keyword id="KW-1185">Reference proteome</keyword>
<keyword id="KW-0812">Transmembrane</keyword>
<keyword id="KW-1133">Transmembrane helix</keyword>
<keyword id="KW-0813">Transport</keyword>
<evidence type="ECO:0000255" key="1">
    <source>
        <dbReference type="HAMAP-Rule" id="MF_01396"/>
    </source>
</evidence>
<sequence length="79" mass="8256">MENLNMDLLYMAAAVMMGLAAIGAAIGIGILGGKFLEGAARQPDLIPLLRTQFFIVMGLVDAIPMIAVGLGLYVMFAVA</sequence>
<proteinExistence type="inferred from homology"/>
<dbReference type="EMBL" id="CP000783">
    <property type="protein sequence ID" value="ABU79197.1"/>
    <property type="molecule type" value="Genomic_DNA"/>
</dbReference>
<dbReference type="RefSeq" id="WP_000429386.1">
    <property type="nucleotide sequence ID" value="NC_009778.1"/>
</dbReference>
<dbReference type="BMRB" id="A7MMV9"/>
<dbReference type="SMR" id="A7MMV9"/>
<dbReference type="GeneID" id="98390858"/>
<dbReference type="KEGG" id="esa:ESA_04011"/>
<dbReference type="HOGENOM" id="CLU_148047_1_0_6"/>
<dbReference type="Proteomes" id="UP000000260">
    <property type="component" value="Chromosome"/>
</dbReference>
<dbReference type="GO" id="GO:0005886">
    <property type="term" value="C:plasma membrane"/>
    <property type="evidence" value="ECO:0007669"/>
    <property type="project" value="UniProtKB-SubCell"/>
</dbReference>
<dbReference type="GO" id="GO:0045259">
    <property type="term" value="C:proton-transporting ATP synthase complex"/>
    <property type="evidence" value="ECO:0007669"/>
    <property type="project" value="UniProtKB-KW"/>
</dbReference>
<dbReference type="GO" id="GO:0033177">
    <property type="term" value="C:proton-transporting two-sector ATPase complex, proton-transporting domain"/>
    <property type="evidence" value="ECO:0007669"/>
    <property type="project" value="InterPro"/>
</dbReference>
<dbReference type="GO" id="GO:0008289">
    <property type="term" value="F:lipid binding"/>
    <property type="evidence" value="ECO:0007669"/>
    <property type="project" value="UniProtKB-KW"/>
</dbReference>
<dbReference type="GO" id="GO:0046933">
    <property type="term" value="F:proton-transporting ATP synthase activity, rotational mechanism"/>
    <property type="evidence" value="ECO:0007669"/>
    <property type="project" value="UniProtKB-UniRule"/>
</dbReference>
<dbReference type="CDD" id="cd18185">
    <property type="entry name" value="ATP-synt_Fo_c_ATPE"/>
    <property type="match status" value="1"/>
</dbReference>
<dbReference type="FunFam" id="1.20.20.10:FF:000002">
    <property type="entry name" value="ATP synthase subunit c"/>
    <property type="match status" value="1"/>
</dbReference>
<dbReference type="Gene3D" id="1.20.20.10">
    <property type="entry name" value="F1F0 ATP synthase subunit C"/>
    <property type="match status" value="1"/>
</dbReference>
<dbReference type="HAMAP" id="MF_01396">
    <property type="entry name" value="ATP_synth_c_bact"/>
    <property type="match status" value="1"/>
</dbReference>
<dbReference type="InterPro" id="IPR005953">
    <property type="entry name" value="ATP_synth_csu_bac/chlpt"/>
</dbReference>
<dbReference type="InterPro" id="IPR000454">
    <property type="entry name" value="ATP_synth_F0_csu"/>
</dbReference>
<dbReference type="InterPro" id="IPR020537">
    <property type="entry name" value="ATP_synth_F0_csu_DDCD_BS"/>
</dbReference>
<dbReference type="InterPro" id="IPR038662">
    <property type="entry name" value="ATP_synth_F0_csu_sf"/>
</dbReference>
<dbReference type="InterPro" id="IPR002379">
    <property type="entry name" value="ATPase_proteolipid_c-like_dom"/>
</dbReference>
<dbReference type="InterPro" id="IPR035921">
    <property type="entry name" value="F/V-ATP_Csub_sf"/>
</dbReference>
<dbReference type="NCBIfam" id="TIGR01260">
    <property type="entry name" value="ATP_synt_c"/>
    <property type="match status" value="1"/>
</dbReference>
<dbReference type="NCBIfam" id="NF005363">
    <property type="entry name" value="PRK06876.1"/>
    <property type="match status" value="1"/>
</dbReference>
<dbReference type="Pfam" id="PF00137">
    <property type="entry name" value="ATP-synt_C"/>
    <property type="match status" value="1"/>
</dbReference>
<dbReference type="PRINTS" id="PR00124">
    <property type="entry name" value="ATPASEC"/>
</dbReference>
<dbReference type="SUPFAM" id="SSF81333">
    <property type="entry name" value="F1F0 ATP synthase subunit C"/>
    <property type="match status" value="1"/>
</dbReference>
<dbReference type="PROSITE" id="PS00605">
    <property type="entry name" value="ATPASE_C"/>
    <property type="match status" value="1"/>
</dbReference>
<organism>
    <name type="scientific">Cronobacter sakazakii (strain ATCC BAA-894)</name>
    <name type="common">Enterobacter sakazakii</name>
    <dbReference type="NCBI Taxonomy" id="290339"/>
    <lineage>
        <taxon>Bacteria</taxon>
        <taxon>Pseudomonadati</taxon>
        <taxon>Pseudomonadota</taxon>
        <taxon>Gammaproteobacteria</taxon>
        <taxon>Enterobacterales</taxon>
        <taxon>Enterobacteriaceae</taxon>
        <taxon>Cronobacter</taxon>
    </lineage>
</organism>
<comment type="function">
    <text evidence="1">F(1)F(0) ATP synthase produces ATP from ADP in the presence of a proton or sodium gradient. F-type ATPases consist of two structural domains, F(1) containing the extramembraneous catalytic core and F(0) containing the membrane proton channel, linked together by a central stalk and a peripheral stalk. During catalysis, ATP synthesis in the catalytic domain of F(1) is coupled via a rotary mechanism of the central stalk subunits to proton translocation.</text>
</comment>
<comment type="function">
    <text evidence="1">Key component of the F(0) channel; it plays a direct role in translocation across the membrane. A homomeric c-ring of between 10-14 subunits forms the central stalk rotor element with the F(1) delta and epsilon subunits.</text>
</comment>
<comment type="subunit">
    <text evidence="1">F-type ATPases have 2 components, F(1) - the catalytic core - and F(0) - the membrane proton channel. F(1) has five subunits: alpha(3), beta(3), gamma(1), delta(1), epsilon(1). F(0) has three main subunits: a(1), b(2) and c(10-14). The alpha and beta chains form an alternating ring which encloses part of the gamma chain. F(1) is attached to F(0) by a central stalk formed by the gamma and epsilon chains, while a peripheral stalk is formed by the delta and b chains.</text>
</comment>
<comment type="subcellular location">
    <subcellularLocation>
        <location evidence="1">Cell inner membrane</location>
        <topology evidence="1">Multi-pass membrane protein</topology>
    </subcellularLocation>
</comment>
<comment type="similarity">
    <text evidence="1">Belongs to the ATPase C chain family.</text>
</comment>
<feature type="chain" id="PRO_1000184377" description="ATP synthase subunit c">
    <location>
        <begin position="1"/>
        <end position="79"/>
    </location>
</feature>
<feature type="transmembrane region" description="Helical" evidence="1">
    <location>
        <begin position="11"/>
        <end position="31"/>
    </location>
</feature>
<feature type="transmembrane region" description="Helical" evidence="1">
    <location>
        <begin position="53"/>
        <end position="73"/>
    </location>
</feature>
<feature type="site" description="Reversibly protonated during proton transport" evidence="1">
    <location>
        <position position="61"/>
    </location>
</feature>
<gene>
    <name evidence="1" type="primary">atpE</name>
    <name type="ordered locus">ESA_04011</name>
</gene>
<name>ATPL_CROS8</name>
<protein>
    <recommendedName>
        <fullName evidence="1">ATP synthase subunit c</fullName>
    </recommendedName>
    <alternativeName>
        <fullName evidence="1">ATP synthase F(0) sector subunit c</fullName>
    </alternativeName>
    <alternativeName>
        <fullName evidence="1">F-type ATPase subunit c</fullName>
        <shortName evidence="1">F-ATPase subunit c</shortName>
    </alternativeName>
    <alternativeName>
        <fullName evidence="1">Lipid-binding protein</fullName>
    </alternativeName>
</protein>
<reference key="1">
    <citation type="journal article" date="2010" name="PLoS ONE">
        <title>Genome sequence of Cronobacter sakazakii BAA-894 and comparative genomic hybridization analysis with other Cronobacter species.</title>
        <authorList>
            <person name="Kucerova E."/>
            <person name="Clifton S.W."/>
            <person name="Xia X.Q."/>
            <person name="Long F."/>
            <person name="Porwollik S."/>
            <person name="Fulton L."/>
            <person name="Fronick C."/>
            <person name="Minx P."/>
            <person name="Kyung K."/>
            <person name="Warren W."/>
            <person name="Fulton R."/>
            <person name="Feng D."/>
            <person name="Wollam A."/>
            <person name="Shah N."/>
            <person name="Bhonagiri V."/>
            <person name="Nash W.E."/>
            <person name="Hallsworth-Pepin K."/>
            <person name="Wilson R.K."/>
            <person name="McClelland M."/>
            <person name="Forsythe S.J."/>
        </authorList>
    </citation>
    <scope>NUCLEOTIDE SEQUENCE [LARGE SCALE GENOMIC DNA]</scope>
    <source>
        <strain>ATCC BAA-894</strain>
    </source>
</reference>